<reference key="1">
    <citation type="journal article" date="2005" name="Science">
        <title>Genome sequence of the PCE-dechlorinating bacterium Dehalococcoides ethenogenes.</title>
        <authorList>
            <person name="Seshadri R."/>
            <person name="Adrian L."/>
            <person name="Fouts D.E."/>
            <person name="Eisen J.A."/>
            <person name="Phillippy A.M."/>
            <person name="Methe B.A."/>
            <person name="Ward N.L."/>
            <person name="Nelson W.C."/>
            <person name="DeBoy R.T."/>
            <person name="Khouri H.M."/>
            <person name="Kolonay J.F."/>
            <person name="Dodson R.J."/>
            <person name="Daugherty S.C."/>
            <person name="Brinkac L.M."/>
            <person name="Sullivan S.A."/>
            <person name="Madupu R."/>
            <person name="Nelson K.E."/>
            <person name="Kang K.H."/>
            <person name="Impraim M."/>
            <person name="Tran K."/>
            <person name="Robinson J.M."/>
            <person name="Forberger H.A."/>
            <person name="Fraser C.M."/>
            <person name="Zinder S.H."/>
            <person name="Heidelberg J.F."/>
        </authorList>
    </citation>
    <scope>NUCLEOTIDE SEQUENCE [LARGE SCALE GENOMIC DNA]</scope>
    <source>
        <strain>ATCC BAA-2266 / KCTC 15142 / 195</strain>
    </source>
</reference>
<comment type="function">
    <text evidence="1">IGPS catalyzes the conversion of PRFAR and glutamine to IGP, AICAR and glutamate. The HisH subunit catalyzes the hydrolysis of glutamine to glutamate and ammonia as part of the synthesis of IGP and AICAR. The resulting ammonia molecule is channeled to the active site of HisF.</text>
</comment>
<comment type="catalytic activity">
    <reaction evidence="1">
        <text>5-[(5-phospho-1-deoxy-D-ribulos-1-ylimino)methylamino]-1-(5-phospho-beta-D-ribosyl)imidazole-4-carboxamide + L-glutamine = D-erythro-1-(imidazol-4-yl)glycerol 3-phosphate + 5-amino-1-(5-phospho-beta-D-ribosyl)imidazole-4-carboxamide + L-glutamate + H(+)</text>
        <dbReference type="Rhea" id="RHEA:24793"/>
        <dbReference type="ChEBI" id="CHEBI:15378"/>
        <dbReference type="ChEBI" id="CHEBI:29985"/>
        <dbReference type="ChEBI" id="CHEBI:58278"/>
        <dbReference type="ChEBI" id="CHEBI:58359"/>
        <dbReference type="ChEBI" id="CHEBI:58475"/>
        <dbReference type="ChEBI" id="CHEBI:58525"/>
        <dbReference type="EC" id="4.3.2.10"/>
    </reaction>
</comment>
<comment type="catalytic activity">
    <reaction evidence="1">
        <text>L-glutamine + H2O = L-glutamate + NH4(+)</text>
        <dbReference type="Rhea" id="RHEA:15889"/>
        <dbReference type="ChEBI" id="CHEBI:15377"/>
        <dbReference type="ChEBI" id="CHEBI:28938"/>
        <dbReference type="ChEBI" id="CHEBI:29985"/>
        <dbReference type="ChEBI" id="CHEBI:58359"/>
        <dbReference type="EC" id="3.5.1.2"/>
    </reaction>
</comment>
<comment type="pathway">
    <text evidence="1">Amino-acid biosynthesis; L-histidine biosynthesis; L-histidine from 5-phospho-alpha-D-ribose 1-diphosphate: step 5/9.</text>
</comment>
<comment type="subunit">
    <text evidence="1">Heterodimer of HisH and HisF.</text>
</comment>
<comment type="subcellular location">
    <subcellularLocation>
        <location evidence="1">Cytoplasm</location>
    </subcellularLocation>
</comment>
<proteinExistence type="inferred from homology"/>
<name>HIS5_DEHM1</name>
<evidence type="ECO:0000255" key="1">
    <source>
        <dbReference type="HAMAP-Rule" id="MF_00278"/>
    </source>
</evidence>
<feature type="chain" id="PRO_0000231720" description="Imidazole glycerol phosphate synthase subunit HisH">
    <location>
        <begin position="1"/>
        <end position="205"/>
    </location>
</feature>
<feature type="domain" description="Glutamine amidotransferase type-1" evidence="1">
    <location>
        <begin position="1"/>
        <end position="205"/>
    </location>
</feature>
<feature type="active site" description="Nucleophile" evidence="1">
    <location>
        <position position="79"/>
    </location>
</feature>
<feature type="active site" evidence="1">
    <location>
        <position position="181"/>
    </location>
</feature>
<feature type="active site" evidence="1">
    <location>
        <position position="183"/>
    </location>
</feature>
<organism>
    <name type="scientific">Dehalococcoides mccartyi (strain ATCC BAA-2266 / KCTC 15142 / 195)</name>
    <name type="common">Dehalococcoides ethenogenes (strain 195)</name>
    <dbReference type="NCBI Taxonomy" id="243164"/>
    <lineage>
        <taxon>Bacteria</taxon>
        <taxon>Bacillati</taxon>
        <taxon>Chloroflexota</taxon>
        <taxon>Dehalococcoidia</taxon>
        <taxon>Dehalococcoidales</taxon>
        <taxon>Dehalococcoidaceae</taxon>
        <taxon>Dehalococcoides</taxon>
    </lineage>
</organism>
<protein>
    <recommendedName>
        <fullName evidence="1">Imidazole glycerol phosphate synthase subunit HisH</fullName>
        <ecNumber evidence="1">4.3.2.10</ecNumber>
    </recommendedName>
    <alternativeName>
        <fullName evidence="1">IGP synthase glutaminase subunit</fullName>
        <ecNumber evidence="1">3.5.1.2</ecNumber>
    </alternativeName>
    <alternativeName>
        <fullName evidence="1">IGP synthase subunit HisH</fullName>
    </alternativeName>
    <alternativeName>
        <fullName evidence="1">ImGP synthase subunit HisH</fullName>
        <shortName evidence="1">IGPS subunit HisH</shortName>
    </alternativeName>
</protein>
<gene>
    <name evidence="1" type="primary">hisH</name>
    <name type="ordered locus">DET1132</name>
</gene>
<dbReference type="EC" id="4.3.2.10" evidence="1"/>
<dbReference type="EC" id="3.5.1.2" evidence="1"/>
<dbReference type="EMBL" id="CP000027">
    <property type="protein sequence ID" value="AAW39568.1"/>
    <property type="molecule type" value="Genomic_DNA"/>
</dbReference>
<dbReference type="RefSeq" id="WP_010936825.1">
    <property type="nucleotide sequence ID" value="NC_002936.3"/>
</dbReference>
<dbReference type="SMR" id="Q3Z7F2"/>
<dbReference type="FunCoup" id="Q3Z7F2">
    <property type="interactions" value="269"/>
</dbReference>
<dbReference type="STRING" id="243164.DET1132"/>
<dbReference type="GeneID" id="3229529"/>
<dbReference type="KEGG" id="det:DET1132"/>
<dbReference type="PATRIC" id="fig|243164.10.peg.1064"/>
<dbReference type="eggNOG" id="COG0118">
    <property type="taxonomic scope" value="Bacteria"/>
</dbReference>
<dbReference type="HOGENOM" id="CLU_071837_2_2_0"/>
<dbReference type="InParanoid" id="Q3Z7F2"/>
<dbReference type="UniPathway" id="UPA00031">
    <property type="reaction ID" value="UER00010"/>
</dbReference>
<dbReference type="Proteomes" id="UP000008289">
    <property type="component" value="Chromosome"/>
</dbReference>
<dbReference type="GO" id="GO:0005737">
    <property type="term" value="C:cytoplasm"/>
    <property type="evidence" value="ECO:0007669"/>
    <property type="project" value="UniProtKB-SubCell"/>
</dbReference>
<dbReference type="GO" id="GO:0004359">
    <property type="term" value="F:glutaminase activity"/>
    <property type="evidence" value="ECO:0007669"/>
    <property type="project" value="UniProtKB-EC"/>
</dbReference>
<dbReference type="GO" id="GO:0000107">
    <property type="term" value="F:imidazoleglycerol-phosphate synthase activity"/>
    <property type="evidence" value="ECO:0007669"/>
    <property type="project" value="UniProtKB-UniRule"/>
</dbReference>
<dbReference type="GO" id="GO:0016829">
    <property type="term" value="F:lyase activity"/>
    <property type="evidence" value="ECO:0007669"/>
    <property type="project" value="UniProtKB-KW"/>
</dbReference>
<dbReference type="GO" id="GO:0000105">
    <property type="term" value="P:L-histidine biosynthetic process"/>
    <property type="evidence" value="ECO:0007669"/>
    <property type="project" value="UniProtKB-UniRule"/>
</dbReference>
<dbReference type="CDD" id="cd01748">
    <property type="entry name" value="GATase1_IGP_Synthase"/>
    <property type="match status" value="1"/>
</dbReference>
<dbReference type="Gene3D" id="3.40.50.880">
    <property type="match status" value="1"/>
</dbReference>
<dbReference type="HAMAP" id="MF_00278">
    <property type="entry name" value="HisH"/>
    <property type="match status" value="1"/>
</dbReference>
<dbReference type="InterPro" id="IPR029062">
    <property type="entry name" value="Class_I_gatase-like"/>
</dbReference>
<dbReference type="InterPro" id="IPR017926">
    <property type="entry name" value="GATASE"/>
</dbReference>
<dbReference type="InterPro" id="IPR010139">
    <property type="entry name" value="Imidazole-glycPsynth_HisH"/>
</dbReference>
<dbReference type="NCBIfam" id="TIGR01855">
    <property type="entry name" value="IMP_synth_hisH"/>
    <property type="match status" value="1"/>
</dbReference>
<dbReference type="PANTHER" id="PTHR42701">
    <property type="entry name" value="IMIDAZOLE GLYCEROL PHOSPHATE SYNTHASE SUBUNIT HISH"/>
    <property type="match status" value="1"/>
</dbReference>
<dbReference type="PANTHER" id="PTHR42701:SF1">
    <property type="entry name" value="IMIDAZOLE GLYCEROL PHOSPHATE SYNTHASE SUBUNIT HISH"/>
    <property type="match status" value="1"/>
</dbReference>
<dbReference type="Pfam" id="PF00117">
    <property type="entry name" value="GATase"/>
    <property type="match status" value="1"/>
</dbReference>
<dbReference type="PIRSF" id="PIRSF000495">
    <property type="entry name" value="Amidotransf_hisH"/>
    <property type="match status" value="1"/>
</dbReference>
<dbReference type="SUPFAM" id="SSF52317">
    <property type="entry name" value="Class I glutamine amidotransferase-like"/>
    <property type="match status" value="1"/>
</dbReference>
<dbReference type="PROSITE" id="PS51273">
    <property type="entry name" value="GATASE_TYPE_1"/>
    <property type="match status" value="1"/>
</dbReference>
<sequence>MIALVDYGGGNLKSVANAIHALGYEFKLTSSPEEILSAEAVILPGVGAAADTMAGLQSKGLDKAIKELVARDIPLLAICVGMQVLFDYTAEGDNTKCLGILKGDVKRLPEGLKIPQMGWNQLKQRVSHPIFEGIPDGIDFYFVHSYYASPADPGIIGATTDYGVDFCSLVISKRLIATQFHPEKSGSYGLKLYQNFFKMALGDKK</sequence>
<accession>Q3Z7F2</accession>
<keyword id="KW-0028">Amino-acid biosynthesis</keyword>
<keyword id="KW-0963">Cytoplasm</keyword>
<keyword id="KW-0315">Glutamine amidotransferase</keyword>
<keyword id="KW-0368">Histidine biosynthesis</keyword>
<keyword id="KW-0378">Hydrolase</keyword>
<keyword id="KW-0456">Lyase</keyword>